<keyword id="KW-0067">ATP-binding</keyword>
<keyword id="KW-0414">Isoprene biosynthesis</keyword>
<keyword id="KW-0418">Kinase</keyword>
<keyword id="KW-0547">Nucleotide-binding</keyword>
<keyword id="KW-0808">Transferase</keyword>
<evidence type="ECO:0000255" key="1">
    <source>
        <dbReference type="HAMAP-Rule" id="MF_00061"/>
    </source>
</evidence>
<comment type="function">
    <text evidence="1">Catalyzes the phosphorylation of the position 2 hydroxy group of 4-diphosphocytidyl-2C-methyl-D-erythritol.</text>
</comment>
<comment type="catalytic activity">
    <reaction evidence="1">
        <text>4-CDP-2-C-methyl-D-erythritol + ATP = 4-CDP-2-C-methyl-D-erythritol 2-phosphate + ADP + H(+)</text>
        <dbReference type="Rhea" id="RHEA:18437"/>
        <dbReference type="ChEBI" id="CHEBI:15378"/>
        <dbReference type="ChEBI" id="CHEBI:30616"/>
        <dbReference type="ChEBI" id="CHEBI:57823"/>
        <dbReference type="ChEBI" id="CHEBI:57919"/>
        <dbReference type="ChEBI" id="CHEBI:456216"/>
        <dbReference type="EC" id="2.7.1.148"/>
    </reaction>
</comment>
<comment type="pathway">
    <text evidence="1">Isoprenoid biosynthesis; isopentenyl diphosphate biosynthesis via DXP pathway; isopentenyl diphosphate from 1-deoxy-D-xylulose 5-phosphate: step 3/6.</text>
</comment>
<comment type="similarity">
    <text evidence="1">Belongs to the GHMP kinase family. IspE subfamily.</text>
</comment>
<dbReference type="EC" id="2.7.1.148" evidence="1"/>
<dbReference type="EMBL" id="CP000422">
    <property type="protein sequence ID" value="ABJ67368.1"/>
    <property type="molecule type" value="Genomic_DNA"/>
</dbReference>
<dbReference type="RefSeq" id="WP_002832687.1">
    <property type="nucleotide sequence ID" value="NC_008525.1"/>
</dbReference>
<dbReference type="SMR" id="Q03HF4"/>
<dbReference type="STRING" id="278197.PEPE_0271"/>
<dbReference type="GeneID" id="33061718"/>
<dbReference type="KEGG" id="ppe:PEPE_0271"/>
<dbReference type="eggNOG" id="COG1947">
    <property type="taxonomic scope" value="Bacteria"/>
</dbReference>
<dbReference type="HOGENOM" id="CLU_053057_1_1_9"/>
<dbReference type="OrthoDB" id="9809438at2"/>
<dbReference type="UniPathway" id="UPA00056">
    <property type="reaction ID" value="UER00094"/>
</dbReference>
<dbReference type="Proteomes" id="UP000000773">
    <property type="component" value="Chromosome"/>
</dbReference>
<dbReference type="GO" id="GO:0050515">
    <property type="term" value="F:4-(cytidine 5'-diphospho)-2-C-methyl-D-erythritol kinase activity"/>
    <property type="evidence" value="ECO:0007669"/>
    <property type="project" value="UniProtKB-UniRule"/>
</dbReference>
<dbReference type="GO" id="GO:0005524">
    <property type="term" value="F:ATP binding"/>
    <property type="evidence" value="ECO:0007669"/>
    <property type="project" value="UniProtKB-UniRule"/>
</dbReference>
<dbReference type="GO" id="GO:0019288">
    <property type="term" value="P:isopentenyl diphosphate biosynthetic process, methylerythritol 4-phosphate pathway"/>
    <property type="evidence" value="ECO:0007669"/>
    <property type="project" value="UniProtKB-UniRule"/>
</dbReference>
<dbReference type="GO" id="GO:0016114">
    <property type="term" value="P:terpenoid biosynthetic process"/>
    <property type="evidence" value="ECO:0007669"/>
    <property type="project" value="InterPro"/>
</dbReference>
<dbReference type="Gene3D" id="3.30.230.10">
    <property type="match status" value="1"/>
</dbReference>
<dbReference type="Gene3D" id="3.30.70.890">
    <property type="entry name" value="GHMP kinase, C-terminal domain"/>
    <property type="match status" value="1"/>
</dbReference>
<dbReference type="HAMAP" id="MF_00061">
    <property type="entry name" value="IspE"/>
    <property type="match status" value="1"/>
</dbReference>
<dbReference type="InterPro" id="IPR013750">
    <property type="entry name" value="GHMP_kinase_C_dom"/>
</dbReference>
<dbReference type="InterPro" id="IPR036554">
    <property type="entry name" value="GHMP_kinase_C_sf"/>
</dbReference>
<dbReference type="InterPro" id="IPR006204">
    <property type="entry name" value="GHMP_kinase_N_dom"/>
</dbReference>
<dbReference type="InterPro" id="IPR004424">
    <property type="entry name" value="IspE"/>
</dbReference>
<dbReference type="InterPro" id="IPR020568">
    <property type="entry name" value="Ribosomal_Su5_D2-typ_SF"/>
</dbReference>
<dbReference type="InterPro" id="IPR014721">
    <property type="entry name" value="Ribsml_uS5_D2-typ_fold_subgr"/>
</dbReference>
<dbReference type="NCBIfam" id="TIGR00154">
    <property type="entry name" value="ispE"/>
    <property type="match status" value="1"/>
</dbReference>
<dbReference type="PANTHER" id="PTHR43527">
    <property type="entry name" value="4-DIPHOSPHOCYTIDYL-2-C-METHYL-D-ERYTHRITOL KINASE, CHLOROPLASTIC"/>
    <property type="match status" value="1"/>
</dbReference>
<dbReference type="PANTHER" id="PTHR43527:SF2">
    <property type="entry name" value="4-DIPHOSPHOCYTIDYL-2-C-METHYL-D-ERYTHRITOL KINASE, CHLOROPLASTIC"/>
    <property type="match status" value="1"/>
</dbReference>
<dbReference type="Pfam" id="PF08544">
    <property type="entry name" value="GHMP_kinases_C"/>
    <property type="match status" value="1"/>
</dbReference>
<dbReference type="Pfam" id="PF00288">
    <property type="entry name" value="GHMP_kinases_N"/>
    <property type="match status" value="1"/>
</dbReference>
<dbReference type="PIRSF" id="PIRSF010376">
    <property type="entry name" value="IspE"/>
    <property type="match status" value="1"/>
</dbReference>
<dbReference type="SUPFAM" id="SSF55060">
    <property type="entry name" value="GHMP Kinase, C-terminal domain"/>
    <property type="match status" value="1"/>
</dbReference>
<dbReference type="SUPFAM" id="SSF54211">
    <property type="entry name" value="Ribosomal protein S5 domain 2-like"/>
    <property type="match status" value="1"/>
</dbReference>
<gene>
    <name evidence="1" type="primary">ispE</name>
    <name type="ordered locus">PEPE_0271</name>
</gene>
<accession>Q03HF4</accession>
<reference key="1">
    <citation type="journal article" date="2006" name="Proc. Natl. Acad. Sci. U.S.A.">
        <title>Comparative genomics of the lactic acid bacteria.</title>
        <authorList>
            <person name="Makarova K.S."/>
            <person name="Slesarev A."/>
            <person name="Wolf Y.I."/>
            <person name="Sorokin A."/>
            <person name="Mirkin B."/>
            <person name="Koonin E.V."/>
            <person name="Pavlov A."/>
            <person name="Pavlova N."/>
            <person name="Karamychev V."/>
            <person name="Polouchine N."/>
            <person name="Shakhova V."/>
            <person name="Grigoriev I."/>
            <person name="Lou Y."/>
            <person name="Rohksar D."/>
            <person name="Lucas S."/>
            <person name="Huang K."/>
            <person name="Goodstein D.M."/>
            <person name="Hawkins T."/>
            <person name="Plengvidhya V."/>
            <person name="Welker D."/>
            <person name="Hughes J."/>
            <person name="Goh Y."/>
            <person name="Benson A."/>
            <person name="Baldwin K."/>
            <person name="Lee J.-H."/>
            <person name="Diaz-Muniz I."/>
            <person name="Dosti B."/>
            <person name="Smeianov V."/>
            <person name="Wechter W."/>
            <person name="Barabote R."/>
            <person name="Lorca G."/>
            <person name="Altermann E."/>
            <person name="Barrangou R."/>
            <person name="Ganesan B."/>
            <person name="Xie Y."/>
            <person name="Rawsthorne H."/>
            <person name="Tamir D."/>
            <person name="Parker C."/>
            <person name="Breidt F."/>
            <person name="Broadbent J.R."/>
            <person name="Hutkins R."/>
            <person name="O'Sullivan D."/>
            <person name="Steele J."/>
            <person name="Unlu G."/>
            <person name="Saier M.H. Jr."/>
            <person name="Klaenhammer T."/>
            <person name="Richardson P."/>
            <person name="Kozyavkin S."/>
            <person name="Weimer B.C."/>
            <person name="Mills D.A."/>
        </authorList>
    </citation>
    <scope>NUCLEOTIDE SEQUENCE [LARGE SCALE GENOMIC DNA]</scope>
    <source>
        <strain>ATCC 25745 / CCUG 21536 / LMG 10740 / 183-1w</strain>
    </source>
</reference>
<sequence length="283" mass="31432">MEITEKAPAKLNLFLDTPFNHPDGLPEWNMIMTSVDLADYVKIESIPGKMGIKVRTNTGFLPNDSRNLAYQAARILQEKYHVRAKVIIEIRKHIPVAAGLGGGSSDAAAVLRGLNKLWNLELSLEVLAKIGLEIDSDVPFCVYSRTAHVLGKGEKVIPLKKLPPMWVVIAKPKLSVSTPYILSKIEHKELQHSNIESILDAIEREDYTDICRYMGNVLEQVTGKEHPEVLKIKNRIKQYGADAAQMSGTGPTVFGVASKSSRAKHIVNSLKGFCHEVYLVRIL</sequence>
<proteinExistence type="inferred from homology"/>
<protein>
    <recommendedName>
        <fullName evidence="1">4-diphosphocytidyl-2-C-methyl-D-erythritol kinase</fullName>
        <shortName evidence="1">CMK</shortName>
        <ecNumber evidence="1">2.7.1.148</ecNumber>
    </recommendedName>
    <alternativeName>
        <fullName evidence="1">4-(cytidine-5'-diphospho)-2-C-methyl-D-erythritol kinase</fullName>
    </alternativeName>
</protein>
<organism>
    <name type="scientific">Pediococcus pentosaceus (strain ATCC 25745 / CCUG 21536 / LMG 10740 / 183-1w)</name>
    <dbReference type="NCBI Taxonomy" id="278197"/>
    <lineage>
        <taxon>Bacteria</taxon>
        <taxon>Bacillati</taxon>
        <taxon>Bacillota</taxon>
        <taxon>Bacilli</taxon>
        <taxon>Lactobacillales</taxon>
        <taxon>Lactobacillaceae</taxon>
        <taxon>Pediococcus</taxon>
    </lineage>
</organism>
<name>ISPE_PEDPA</name>
<feature type="chain" id="PRO_1000007867" description="4-diphosphocytidyl-2-C-methyl-D-erythritol kinase">
    <location>
        <begin position="1"/>
        <end position="283"/>
    </location>
</feature>
<feature type="active site" evidence="1">
    <location>
        <position position="10"/>
    </location>
</feature>
<feature type="active site" evidence="1">
    <location>
        <position position="137"/>
    </location>
</feature>
<feature type="binding site" evidence="1">
    <location>
        <begin position="95"/>
        <end position="105"/>
    </location>
    <ligand>
        <name>ATP</name>
        <dbReference type="ChEBI" id="CHEBI:30616"/>
    </ligand>
</feature>